<organism>
    <name type="scientific">Saccharomyces cerevisiae (strain ATCC 204508 / S288c)</name>
    <name type="common">Baker's yeast</name>
    <dbReference type="NCBI Taxonomy" id="559292"/>
    <lineage>
        <taxon>Eukaryota</taxon>
        <taxon>Fungi</taxon>
        <taxon>Dikarya</taxon>
        <taxon>Ascomycota</taxon>
        <taxon>Saccharomycotina</taxon>
        <taxon>Saccharomycetes</taxon>
        <taxon>Saccharomycetales</taxon>
        <taxon>Saccharomycetaceae</taxon>
        <taxon>Saccharomyces</taxon>
    </lineage>
</organism>
<keyword id="KW-0472">Membrane</keyword>
<keyword id="KW-0496">Mitochondrion</keyword>
<keyword id="KW-0999">Mitochondrion inner membrane</keyword>
<keyword id="KW-1185">Reference proteome</keyword>
<keyword id="KW-0677">Repeat</keyword>
<keyword id="KW-0812">Transmembrane</keyword>
<keyword id="KW-1133">Transmembrane helix</keyword>
<keyword id="KW-0813">Transport</keyword>
<dbReference type="EMBL" id="Z25485">
    <property type="protein sequence ID" value="CAA80973.1"/>
    <property type="molecule type" value="Genomic_DNA"/>
</dbReference>
<dbReference type="EMBL" id="Z49595">
    <property type="protein sequence ID" value="CAA89624.1"/>
    <property type="molecule type" value="Genomic_DNA"/>
</dbReference>
<dbReference type="EMBL" id="AY692924">
    <property type="protein sequence ID" value="AAT92943.1"/>
    <property type="molecule type" value="Genomic_DNA"/>
</dbReference>
<dbReference type="EMBL" id="BK006943">
    <property type="protein sequence ID" value="DAA08880.1"/>
    <property type="molecule type" value="Genomic_DNA"/>
</dbReference>
<dbReference type="PIR" id="S57116">
    <property type="entry name" value="S57116"/>
</dbReference>
<dbReference type="RefSeq" id="NP_012629.1">
    <property type="nucleotide sequence ID" value="NM_001181753.1"/>
</dbReference>
<dbReference type="SMR" id="P33303"/>
<dbReference type="BioGRID" id="33850">
    <property type="interactions" value="83"/>
</dbReference>
<dbReference type="DIP" id="DIP-8019N"/>
<dbReference type="FunCoup" id="P33303">
    <property type="interactions" value="500"/>
</dbReference>
<dbReference type="IntAct" id="P33303">
    <property type="interactions" value="4"/>
</dbReference>
<dbReference type="MINT" id="P33303"/>
<dbReference type="STRING" id="4932.YJR095W"/>
<dbReference type="TCDB" id="2.A.29.13.1">
    <property type="family name" value="the mitochondrial carrier (mc) family"/>
</dbReference>
<dbReference type="PaxDb" id="4932-YJR095W"/>
<dbReference type="PeptideAtlas" id="P33303"/>
<dbReference type="TopDownProteomics" id="P33303"/>
<dbReference type="EnsemblFungi" id="YJR095W_mRNA">
    <property type="protein sequence ID" value="YJR095W"/>
    <property type="gene ID" value="YJR095W"/>
</dbReference>
<dbReference type="GeneID" id="853558"/>
<dbReference type="KEGG" id="sce:YJR095W"/>
<dbReference type="AGR" id="SGD:S000003856"/>
<dbReference type="SGD" id="S000003856">
    <property type="gene designation" value="SFC1"/>
</dbReference>
<dbReference type="VEuPathDB" id="FungiDB:YJR095W"/>
<dbReference type="eggNOG" id="KOG0756">
    <property type="taxonomic scope" value="Eukaryota"/>
</dbReference>
<dbReference type="HOGENOM" id="CLU_015166_5_0_1"/>
<dbReference type="InParanoid" id="P33303"/>
<dbReference type="OMA" id="KDWYKGG"/>
<dbReference type="OrthoDB" id="204711at2759"/>
<dbReference type="BioCyc" id="YEAST:G3O-31723-MONOMER"/>
<dbReference type="BioGRID-ORCS" id="853558">
    <property type="hits" value="1 hit in 10 CRISPR screens"/>
</dbReference>
<dbReference type="PRO" id="PR:P33303"/>
<dbReference type="Proteomes" id="UP000002311">
    <property type="component" value="Chromosome X"/>
</dbReference>
<dbReference type="RNAct" id="P33303">
    <property type="molecule type" value="protein"/>
</dbReference>
<dbReference type="GO" id="GO:0005743">
    <property type="term" value="C:mitochondrial inner membrane"/>
    <property type="evidence" value="ECO:0007669"/>
    <property type="project" value="UniProtKB-SubCell"/>
</dbReference>
<dbReference type="GO" id="GO:0005739">
    <property type="term" value="C:mitochondrion"/>
    <property type="evidence" value="ECO:0007005"/>
    <property type="project" value="SGD"/>
</dbReference>
<dbReference type="GO" id="GO:0005469">
    <property type="term" value="F:succinate:fumarate antiporter activity"/>
    <property type="evidence" value="ECO:0000314"/>
    <property type="project" value="SGD"/>
</dbReference>
<dbReference type="GO" id="GO:0015741">
    <property type="term" value="P:fumarate transport"/>
    <property type="evidence" value="ECO:0000314"/>
    <property type="project" value="SGD"/>
</dbReference>
<dbReference type="GO" id="GO:0015744">
    <property type="term" value="P:succinate transport"/>
    <property type="evidence" value="ECO:0000314"/>
    <property type="project" value="SGD"/>
</dbReference>
<dbReference type="FunFam" id="1.50.40.10:FF:000021">
    <property type="entry name" value="SFC1p Mitochondrial succinate-fumarate transporter"/>
    <property type="match status" value="1"/>
</dbReference>
<dbReference type="Gene3D" id="1.50.40.10">
    <property type="entry name" value="Mitochondrial carrier domain"/>
    <property type="match status" value="1"/>
</dbReference>
<dbReference type="InterPro" id="IPR002067">
    <property type="entry name" value="Mit_carrier"/>
</dbReference>
<dbReference type="InterPro" id="IPR018108">
    <property type="entry name" value="Mitochondrial_sb/sol_carrier"/>
</dbReference>
<dbReference type="InterPro" id="IPR023395">
    <property type="entry name" value="Mt_carrier_dom_sf"/>
</dbReference>
<dbReference type="InterPro" id="IPR049563">
    <property type="entry name" value="TXTP-like"/>
</dbReference>
<dbReference type="PANTHER" id="PTHR45788">
    <property type="entry name" value="SUCCINATE/FUMARATE MITOCHONDRIAL TRANSPORTER-RELATED"/>
    <property type="match status" value="1"/>
</dbReference>
<dbReference type="PANTHER" id="PTHR45788:SF2">
    <property type="entry name" value="SUCCINATE_FUMARATE MITOCHONDRIAL TRANSPORTER"/>
    <property type="match status" value="1"/>
</dbReference>
<dbReference type="Pfam" id="PF00153">
    <property type="entry name" value="Mito_carr"/>
    <property type="match status" value="3"/>
</dbReference>
<dbReference type="PRINTS" id="PR00926">
    <property type="entry name" value="MITOCARRIER"/>
</dbReference>
<dbReference type="SUPFAM" id="SSF103506">
    <property type="entry name" value="Mitochondrial carrier"/>
    <property type="match status" value="1"/>
</dbReference>
<dbReference type="PROSITE" id="PS50920">
    <property type="entry name" value="SOLCAR"/>
    <property type="match status" value="3"/>
</dbReference>
<sequence length="322" mass="35340">MSQKKKASHPAINLMAGGTAGLFEALCCHPLDTIKVRMQIYRRVAGIEHVKPPGFIKTGRTIYQKEGFLALYKGLGAVVIGIIPKMAIRFSSYEFYRTLLVNKESGIVSTGNTFVAGVGAGITEAVLVVNPMEVVKIRLQAQHLTPSEPNAGPKYNNAIHAAYTIVKEEGVSALYRGVSLTAARQATNQGANFTVYSKLKEFLQNYHQMDVLPSWETSCIGLISGAIGPFSNAPLDTIKTRLQKDKSISLEKQSGMKKIITIGAQLLKEEGFRALYKGITPRVMRVAPGQAVTFTVYEYVREHLENLGIFKKNDTPKPKPLK</sequence>
<protein>
    <recommendedName>
        <fullName>Succinate/fumarate mitochondrial transporter</fullName>
    </recommendedName>
    <alternativeName>
        <fullName>Regulator of acetyl-CoA synthase activity</fullName>
    </alternativeName>
</protein>
<proteinExistence type="evidence at protein level"/>
<evidence type="ECO:0000255" key="1"/>
<evidence type="ECO:0000305" key="2"/>
<accession>P33303</accession>
<accession>D6VWR4</accession>
<reference key="1">
    <citation type="journal article" date="1994" name="Mol. Gen. Genet.">
        <title>ACR1, a gene encoding a protein related to mitochondrial carriers, is essential for acetyl-CoA synthetase activity in Saccharomyces cerevisiae.</title>
        <authorList>
            <person name="Fernandez M."/>
            <person name="Fernandez E."/>
            <person name="Rodicio R."/>
        </authorList>
    </citation>
    <scope>NUCLEOTIDE SEQUENCE [GENOMIC DNA]</scope>
</reference>
<reference key="2">
    <citation type="journal article" date="1996" name="EMBO J.">
        <title>Complete nucleotide sequence of Saccharomyces cerevisiae chromosome X.</title>
        <authorList>
            <person name="Galibert F."/>
            <person name="Alexandraki D."/>
            <person name="Baur A."/>
            <person name="Boles E."/>
            <person name="Chalwatzis N."/>
            <person name="Chuat J.-C."/>
            <person name="Coster F."/>
            <person name="Cziepluch C."/>
            <person name="de Haan M."/>
            <person name="Domdey H."/>
            <person name="Durand P."/>
            <person name="Entian K.-D."/>
            <person name="Gatius M."/>
            <person name="Goffeau A."/>
            <person name="Grivell L.A."/>
            <person name="Hennemann A."/>
            <person name="Herbert C.J."/>
            <person name="Heumann K."/>
            <person name="Hilger F."/>
            <person name="Hollenberg C.P."/>
            <person name="Huang M.-E."/>
            <person name="Jacq C."/>
            <person name="Jauniaux J.-C."/>
            <person name="Katsoulou C."/>
            <person name="Kirchrath L."/>
            <person name="Kleine K."/>
            <person name="Kordes E."/>
            <person name="Koetter P."/>
            <person name="Liebl S."/>
            <person name="Louis E.J."/>
            <person name="Manus V."/>
            <person name="Mewes H.-W."/>
            <person name="Miosga T."/>
            <person name="Obermaier B."/>
            <person name="Perea J."/>
            <person name="Pohl T.M."/>
            <person name="Portetelle D."/>
            <person name="Pujol A."/>
            <person name="Purnelle B."/>
            <person name="Ramezani Rad M."/>
            <person name="Rasmussen S.W."/>
            <person name="Rose M."/>
            <person name="Rossau R."/>
            <person name="Schaaff-Gerstenschlaeger I."/>
            <person name="Smits P.H.M."/>
            <person name="Scarcez T."/>
            <person name="Soriano N."/>
            <person name="To Van D."/>
            <person name="Tzermia M."/>
            <person name="Van Broekhoven A."/>
            <person name="Vandenbol M."/>
            <person name="Wedler H."/>
            <person name="von Wettstein D."/>
            <person name="Wambutt R."/>
            <person name="Zagulski M."/>
            <person name="Zollner A."/>
            <person name="Karpfinger-Hartl L."/>
        </authorList>
    </citation>
    <scope>NUCLEOTIDE SEQUENCE [LARGE SCALE GENOMIC DNA]</scope>
    <source>
        <strain>ATCC 204508 / S288c</strain>
    </source>
</reference>
<reference key="3">
    <citation type="journal article" date="2014" name="G3 (Bethesda)">
        <title>The reference genome sequence of Saccharomyces cerevisiae: Then and now.</title>
        <authorList>
            <person name="Engel S.R."/>
            <person name="Dietrich F.S."/>
            <person name="Fisk D.G."/>
            <person name="Binkley G."/>
            <person name="Balakrishnan R."/>
            <person name="Costanzo M.C."/>
            <person name="Dwight S.S."/>
            <person name="Hitz B.C."/>
            <person name="Karra K."/>
            <person name="Nash R.S."/>
            <person name="Weng S."/>
            <person name="Wong E.D."/>
            <person name="Lloyd P."/>
            <person name="Skrzypek M.S."/>
            <person name="Miyasato S.R."/>
            <person name="Simison M."/>
            <person name="Cherry J.M."/>
        </authorList>
    </citation>
    <scope>GENOME REANNOTATION</scope>
    <source>
        <strain>ATCC 204508 / S288c</strain>
    </source>
</reference>
<reference key="4">
    <citation type="journal article" date="2007" name="Genome Res.">
        <title>Approaching a complete repository of sequence-verified protein-encoding clones for Saccharomyces cerevisiae.</title>
        <authorList>
            <person name="Hu Y."/>
            <person name="Rolfs A."/>
            <person name="Bhullar B."/>
            <person name="Murthy T.V.S."/>
            <person name="Zhu C."/>
            <person name="Berger M.F."/>
            <person name="Camargo A.A."/>
            <person name="Kelley F."/>
            <person name="McCarron S."/>
            <person name="Jepson D."/>
            <person name="Richardson A."/>
            <person name="Raphael J."/>
            <person name="Moreira D."/>
            <person name="Taycher E."/>
            <person name="Zuo D."/>
            <person name="Mohr S."/>
            <person name="Kane M.F."/>
            <person name="Williamson J."/>
            <person name="Simpson A.J.G."/>
            <person name="Bulyk M.L."/>
            <person name="Harlow E."/>
            <person name="Marsischky G."/>
            <person name="Kolodner R.D."/>
            <person name="LaBaer J."/>
        </authorList>
    </citation>
    <scope>NUCLEOTIDE SEQUENCE [GENOMIC DNA]</scope>
    <source>
        <strain>ATCC 204508 / S288c</strain>
    </source>
</reference>
<reference key="5">
    <citation type="journal article" date="1997" name="FEBS Lett.">
        <title>Identification of the yeast ACR1 gene product as a succinate-fumarate transporter essential for growth on ethanol or acetate.</title>
        <authorList>
            <person name="Palmieri L."/>
            <person name="Lasorsa F.M."/>
            <person name="De Palma A."/>
            <person name="Palmieri F."/>
            <person name="Runswick M.J."/>
            <person name="Walker J.E."/>
        </authorList>
    </citation>
    <scope>CHARACTERIZATION</scope>
</reference>
<gene>
    <name type="primary">SFC1</name>
    <name type="synonym">ACR1</name>
    <name type="ordered locus">YJR095W</name>
    <name type="ORF">J1921</name>
</gene>
<feature type="chain" id="PRO_0000090679" description="Succinate/fumarate mitochondrial transporter">
    <location>
        <begin position="1"/>
        <end position="322"/>
    </location>
</feature>
<feature type="transmembrane region" description="Helical; Name=1" evidence="1">
    <location>
        <begin position="11"/>
        <end position="31"/>
    </location>
</feature>
<feature type="transmembrane region" description="Helical; Name=2" evidence="1">
    <location>
        <begin position="68"/>
        <end position="88"/>
    </location>
</feature>
<feature type="transmembrane region" description="Helical; Name=3" evidence="1">
    <location>
        <begin position="114"/>
        <end position="134"/>
    </location>
</feature>
<feature type="transmembrane region" description="Helical; Name=4" evidence="1">
    <location>
        <begin position="177"/>
        <end position="193"/>
    </location>
</feature>
<feature type="transmembrane region" description="Helical; Name=5" evidence="1">
    <location>
        <begin position="219"/>
        <end position="235"/>
    </location>
</feature>
<feature type="transmembrane region" description="Helical; Name=6" evidence="1">
    <location>
        <begin position="278"/>
        <end position="295"/>
    </location>
</feature>
<feature type="repeat" description="Solcar 1">
    <location>
        <begin position="8"/>
        <end position="99"/>
    </location>
</feature>
<feature type="repeat" description="Solcar 2">
    <location>
        <begin position="111"/>
        <end position="202"/>
    </location>
</feature>
<feature type="repeat" description="Solcar 3">
    <location>
        <begin position="212"/>
        <end position="303"/>
    </location>
</feature>
<feature type="sequence conflict" description="In Ref. 1; CAA80973." evidence="2" ref="1">
    <original>VREHLENLGIFKKNDTPKPKPLK</original>
    <variation>RKGAFQKIWVYSRRMTHQSQSH</variation>
    <location>
        <begin position="300"/>
        <end position="322"/>
    </location>
</feature>
<comment type="function">
    <text>Transports cytoplasmic succinate, derived from isocitrate by the action of isocitrate lyase in the cytosol, into the mitochondrial matrix in exchange for fumarate.</text>
</comment>
<comment type="subcellular location">
    <subcellularLocation>
        <location>Mitochondrion inner membrane</location>
        <topology>Multi-pass membrane protein</topology>
    </subcellularLocation>
</comment>
<comment type="induction">
    <text>By ethanol or acetate as sole carbon sources. Repressed by glucose.</text>
</comment>
<comment type="similarity">
    <text evidence="2">Belongs to the mitochondrial carrier (TC 2.A.29) family.</text>
</comment>
<name>SFC1_YEAST</name>